<gene>
    <name type="primary">Arsb</name>
</gene>
<feature type="chain" id="PRO_0000192682" description="Arylsulfatase B">
    <location>
        <begin position="1"/>
        <end position="528"/>
    </location>
</feature>
<feature type="active site" description="Nucleophile" evidence="2">
    <location>
        <position position="86"/>
    </location>
</feature>
<feature type="active site" evidence="2">
    <location>
        <position position="142"/>
    </location>
</feature>
<feature type="binding site" evidence="1">
    <location>
        <position position="48"/>
    </location>
    <ligand>
        <name>Ca(2+)</name>
        <dbReference type="ChEBI" id="CHEBI:29108"/>
    </ligand>
</feature>
<feature type="binding site" evidence="1">
    <location>
        <position position="49"/>
    </location>
    <ligand>
        <name>Ca(2+)</name>
        <dbReference type="ChEBI" id="CHEBI:29108"/>
    </ligand>
</feature>
<feature type="binding site" description="via 3-oxoalanine" evidence="1">
    <location>
        <position position="86"/>
    </location>
    <ligand>
        <name>Ca(2+)</name>
        <dbReference type="ChEBI" id="CHEBI:29108"/>
    </ligand>
</feature>
<feature type="binding site" evidence="1">
    <location>
        <position position="140"/>
    </location>
    <ligand>
        <name>substrate</name>
    </ligand>
</feature>
<feature type="binding site" evidence="1">
    <location>
        <position position="237"/>
    </location>
    <ligand>
        <name>substrate</name>
    </ligand>
</feature>
<feature type="binding site" evidence="1">
    <location>
        <position position="295"/>
    </location>
    <ligand>
        <name>Ca(2+)</name>
        <dbReference type="ChEBI" id="CHEBI:29108"/>
    </ligand>
</feature>
<feature type="binding site" evidence="1">
    <location>
        <position position="296"/>
    </location>
    <ligand>
        <name>Ca(2+)</name>
        <dbReference type="ChEBI" id="CHEBI:29108"/>
    </ligand>
</feature>
<feature type="binding site" evidence="1">
    <location>
        <position position="313"/>
    </location>
    <ligand>
        <name>substrate</name>
    </ligand>
</feature>
<feature type="modified residue" description="3-oxoalanine (Cys)" evidence="2">
    <location>
        <position position="86"/>
    </location>
</feature>
<feature type="glycosylation site" description="N-linked (GlcNAc...) asparagine" evidence="4">
    <location>
        <position position="183"/>
    </location>
</feature>
<feature type="glycosylation site" description="N-linked (GlcNAc...) asparagine" evidence="4">
    <location>
        <position position="274"/>
    </location>
</feature>
<feature type="glycosylation site" description="N-linked (GlcNAc...) asparagine" evidence="4">
    <location>
        <position position="286"/>
    </location>
</feature>
<feature type="glycosylation site" description="N-linked (GlcNAc...) asparagine" evidence="4">
    <location>
        <position position="410"/>
    </location>
</feature>
<feature type="glycosylation site" description="N-linked (GlcNAc...) asparagine" evidence="4">
    <location>
        <position position="421"/>
    </location>
</feature>
<feature type="glycosylation site" description="N-linked (GlcNAc...) asparagine" evidence="4">
    <location>
        <position position="453"/>
    </location>
</feature>
<feature type="disulfide bond" evidence="1">
    <location>
        <begin position="112"/>
        <end position="516"/>
    </location>
</feature>
<feature type="disulfide bond" evidence="1">
    <location>
        <begin position="116"/>
        <end position="150"/>
    </location>
</feature>
<feature type="disulfide bond" evidence="1">
    <location>
        <begin position="176"/>
        <end position="187"/>
    </location>
</feature>
<feature type="disulfide bond" evidence="1">
    <location>
        <begin position="400"/>
        <end position="442"/>
    </location>
</feature>
<feature type="sequence conflict" description="In Ref. 1; AABR03012149." evidence="8" ref="1">
    <original>GF</original>
    <variation>IR</variation>
    <location>
        <begin position="56"/>
        <end position="57"/>
    </location>
</feature>
<feature type="sequence conflict" description="In Ref. 1; AABR03012149." evidence="8" ref="1">
    <original>YA</original>
    <variation>SS</variation>
    <location>
        <begin position="133"/>
        <end position="134"/>
    </location>
</feature>
<proteinExistence type="evidence at transcript level"/>
<comment type="function">
    <text evidence="3 6">Removes sulfate groups from chondroitin-4-sulfate (C4S) and regulates its degradation (PubMed:24311516). In the central nervous system, is a regulator of neurite outgrowth and neuronal plasticity, acting through the control of sulfate glycosaminoglycans and neurocan levels (PubMed:24311516). Involved in the regulation of cell adhesion, cell migration and invasion in colonic epithelium (By similarity).</text>
</comment>
<comment type="catalytic activity">
    <reaction>
        <text>Hydrolysis of the 4-sulfate groups of the N-acetyl-D-galactosamine 4-sulfate units of chondroitin sulfate and dermatan sulfate.</text>
        <dbReference type="EC" id="3.1.6.12"/>
    </reaction>
</comment>
<comment type="cofactor">
    <cofactor evidence="1">
        <name>Ca(2+)</name>
        <dbReference type="ChEBI" id="CHEBI:29108"/>
    </cofactor>
    <text evidence="1">Binds 1 Ca(2+) ion per subunit.</text>
</comment>
<comment type="activity regulation">
    <text evidence="6">Inhibited by ethanol.</text>
</comment>
<comment type="subunit">
    <text evidence="1">Homodimer.</text>
</comment>
<comment type="subcellular location">
    <subcellularLocation>
        <location>Lysosome</location>
    </subcellularLocation>
    <subcellularLocation>
        <location evidence="5">Cell surface</location>
    </subcellularLocation>
</comment>
<comment type="disease">
    <text evidence="7">Defects in Arsb are the cause of mucopolysaccharidosis type VI (MPS-VI) (PubMed:8575749).</text>
</comment>
<comment type="similarity">
    <text evidence="8">Belongs to the sulfatase family.</text>
</comment>
<reference key="1">
    <citation type="journal article" date="2004" name="Nature">
        <title>Genome sequence of the Brown Norway rat yields insights into mammalian evolution.</title>
        <authorList>
            <person name="Gibbs R.A."/>
            <person name="Weinstock G.M."/>
            <person name="Metzker M.L."/>
            <person name="Muzny D.M."/>
            <person name="Sodergren E.J."/>
            <person name="Scherer S."/>
            <person name="Scott G."/>
            <person name="Steffen D."/>
            <person name="Worley K.C."/>
            <person name="Burch P.E."/>
            <person name="Okwuonu G."/>
            <person name="Hines S."/>
            <person name="Lewis L."/>
            <person name="Deramo C."/>
            <person name="Delgado O."/>
            <person name="Dugan-Rocha S."/>
            <person name="Miner G."/>
            <person name="Morgan M."/>
            <person name="Hawes A."/>
            <person name="Gill R."/>
            <person name="Holt R.A."/>
            <person name="Adams M.D."/>
            <person name="Amanatides P.G."/>
            <person name="Baden-Tillson H."/>
            <person name="Barnstead M."/>
            <person name="Chin S."/>
            <person name="Evans C.A."/>
            <person name="Ferriera S."/>
            <person name="Fosler C."/>
            <person name="Glodek A."/>
            <person name="Gu Z."/>
            <person name="Jennings D."/>
            <person name="Kraft C.L."/>
            <person name="Nguyen T."/>
            <person name="Pfannkoch C.M."/>
            <person name="Sitter C."/>
            <person name="Sutton G.G."/>
            <person name="Venter J.C."/>
            <person name="Woodage T."/>
            <person name="Smith D."/>
            <person name="Lee H.-M."/>
            <person name="Gustafson E."/>
            <person name="Cahill P."/>
            <person name="Kana A."/>
            <person name="Doucette-Stamm L."/>
            <person name="Weinstock K."/>
            <person name="Fechtel K."/>
            <person name="Weiss R.B."/>
            <person name="Dunn D.M."/>
            <person name="Green E.D."/>
            <person name="Blakesley R.W."/>
            <person name="Bouffard G.G."/>
            <person name="De Jong P.J."/>
            <person name="Osoegawa K."/>
            <person name="Zhu B."/>
            <person name="Marra M."/>
            <person name="Schein J."/>
            <person name="Bosdet I."/>
            <person name="Fjell C."/>
            <person name="Jones S."/>
            <person name="Krzywinski M."/>
            <person name="Mathewson C."/>
            <person name="Siddiqui A."/>
            <person name="Wye N."/>
            <person name="McPherson J."/>
            <person name="Zhao S."/>
            <person name="Fraser C.M."/>
            <person name="Shetty J."/>
            <person name="Shatsman S."/>
            <person name="Geer K."/>
            <person name="Chen Y."/>
            <person name="Abramzon S."/>
            <person name="Nierman W.C."/>
            <person name="Havlak P.H."/>
            <person name="Chen R."/>
            <person name="Durbin K.J."/>
            <person name="Egan A."/>
            <person name="Ren Y."/>
            <person name="Song X.-Z."/>
            <person name="Li B."/>
            <person name="Liu Y."/>
            <person name="Qin X."/>
            <person name="Cawley S."/>
            <person name="Cooney A.J."/>
            <person name="D'Souza L.M."/>
            <person name="Martin K."/>
            <person name="Wu J.Q."/>
            <person name="Gonzalez-Garay M.L."/>
            <person name="Jackson A.R."/>
            <person name="Kalafus K.J."/>
            <person name="McLeod M.P."/>
            <person name="Milosavljevic A."/>
            <person name="Virk D."/>
            <person name="Volkov A."/>
            <person name="Wheeler D.A."/>
            <person name="Zhang Z."/>
            <person name="Bailey J.A."/>
            <person name="Eichler E.E."/>
            <person name="Tuzun E."/>
            <person name="Birney E."/>
            <person name="Mongin E."/>
            <person name="Ureta-Vidal A."/>
            <person name="Woodwark C."/>
            <person name="Zdobnov E."/>
            <person name="Bork P."/>
            <person name="Suyama M."/>
            <person name="Torrents D."/>
            <person name="Alexandersson M."/>
            <person name="Trask B.J."/>
            <person name="Young J.M."/>
            <person name="Huang H."/>
            <person name="Wang H."/>
            <person name="Xing H."/>
            <person name="Daniels S."/>
            <person name="Gietzen D."/>
            <person name="Schmidt J."/>
            <person name="Stevens K."/>
            <person name="Vitt U."/>
            <person name="Wingrove J."/>
            <person name="Camara F."/>
            <person name="Mar Alba M."/>
            <person name="Abril J.F."/>
            <person name="Guigo R."/>
            <person name="Smit A."/>
            <person name="Dubchak I."/>
            <person name="Rubin E.M."/>
            <person name="Couronne O."/>
            <person name="Poliakov A."/>
            <person name="Huebner N."/>
            <person name="Ganten D."/>
            <person name="Goesele C."/>
            <person name="Hummel O."/>
            <person name="Kreitler T."/>
            <person name="Lee Y.-A."/>
            <person name="Monti J."/>
            <person name="Schulz H."/>
            <person name="Zimdahl H."/>
            <person name="Himmelbauer H."/>
            <person name="Lehrach H."/>
            <person name="Jacob H.J."/>
            <person name="Bromberg S."/>
            <person name="Gullings-Handley J."/>
            <person name="Jensen-Seaman M.I."/>
            <person name="Kwitek A.E."/>
            <person name="Lazar J."/>
            <person name="Pasko D."/>
            <person name="Tonellato P.J."/>
            <person name="Twigger S."/>
            <person name="Ponting C.P."/>
            <person name="Duarte J.M."/>
            <person name="Rice S."/>
            <person name="Goodstadt L."/>
            <person name="Beatson S.A."/>
            <person name="Emes R.D."/>
            <person name="Winter E.E."/>
            <person name="Webber C."/>
            <person name="Brandt P."/>
            <person name="Nyakatura G."/>
            <person name="Adetobi M."/>
            <person name="Chiaromonte F."/>
            <person name="Elnitski L."/>
            <person name="Eswara P."/>
            <person name="Hardison R.C."/>
            <person name="Hou M."/>
            <person name="Kolbe D."/>
            <person name="Makova K."/>
            <person name="Miller W."/>
            <person name="Nekrutenko A."/>
            <person name="Riemer C."/>
            <person name="Schwartz S."/>
            <person name="Taylor J."/>
            <person name="Yang S."/>
            <person name="Zhang Y."/>
            <person name="Lindpaintner K."/>
            <person name="Andrews T.D."/>
            <person name="Caccamo M."/>
            <person name="Clamp M."/>
            <person name="Clarke L."/>
            <person name="Curwen V."/>
            <person name="Durbin R.M."/>
            <person name="Eyras E."/>
            <person name="Searle S.M."/>
            <person name="Cooper G.M."/>
            <person name="Batzoglou S."/>
            <person name="Brudno M."/>
            <person name="Sidow A."/>
            <person name="Stone E.A."/>
            <person name="Payseur B.A."/>
            <person name="Bourque G."/>
            <person name="Lopez-Otin C."/>
            <person name="Puente X.S."/>
            <person name="Chakrabarti K."/>
            <person name="Chatterji S."/>
            <person name="Dewey C."/>
            <person name="Pachter L."/>
            <person name="Bray N."/>
            <person name="Yap V.B."/>
            <person name="Caspi A."/>
            <person name="Tesler G."/>
            <person name="Pevzner P.A."/>
            <person name="Haussler D."/>
            <person name="Roskin K.M."/>
            <person name="Baertsch R."/>
            <person name="Clawson H."/>
            <person name="Furey T.S."/>
            <person name="Hinrichs A.S."/>
            <person name="Karolchik D."/>
            <person name="Kent W.J."/>
            <person name="Rosenbloom K.R."/>
            <person name="Trumbower H."/>
            <person name="Weirauch M."/>
            <person name="Cooper D.N."/>
            <person name="Stenson P.D."/>
            <person name="Ma B."/>
            <person name="Brent M."/>
            <person name="Arumugam M."/>
            <person name="Shteynberg D."/>
            <person name="Copley R.R."/>
            <person name="Taylor M.S."/>
            <person name="Riethman H."/>
            <person name="Mudunuri U."/>
            <person name="Peterson J."/>
            <person name="Guyer M."/>
            <person name="Felsenfeld A."/>
            <person name="Old S."/>
            <person name="Mockrin S."/>
            <person name="Collins F.S."/>
        </authorList>
    </citation>
    <scope>NUCLEOTIDE SEQUENCE [LARGE SCALE GENOMIC DNA]</scope>
    <source>
        <strain>Brown Norway</strain>
    </source>
</reference>
<reference key="2">
    <citation type="journal article" date="1995" name="Genomics">
        <title>Mucopolysaccharidosis type VI in rats: isolation of cDNAs encoding arylsulfatase B, chromosomal localization of the gene, and identification of the mutation.</title>
        <authorList>
            <person name="Kunieda T."/>
        </authorList>
    </citation>
    <scope>NUCLEOTIDE SEQUENCE [MRNA] OF 1-55</scope>
    <scope>DISEASE</scope>
    <source>
        <strain>Sprague-Dawley</strain>
        <tissue>Liver</tissue>
    </source>
</reference>
<reference key="3">
    <citation type="journal article" date="2005" name="Hum. Mol. Genet.">
        <title>Sulfatases and sulfatase modifying factors: an exclusive and promiscuous relationship.</title>
        <authorList>
            <person name="Sardiello M."/>
            <person name="Annunziata I."/>
            <person name="Roma G."/>
            <person name="Ballabio A."/>
        </authorList>
    </citation>
    <scope>IDENTIFICATION</scope>
</reference>
<reference key="4">
    <citation type="journal article" date="2009" name="Med. Mol. Morphol.">
        <title>Cell-surface arylsulfatase A and B on sinusoidal endothelial cells, hepatocytes, and Kupffer cells in mammalian livers.</title>
        <authorList>
            <person name="Mitsunaga-Nakatsubo K."/>
            <person name="Kusunoki S."/>
            <person name="Kawakami H."/>
            <person name="Akasaka K."/>
            <person name="Akimoto Y."/>
        </authorList>
    </citation>
    <scope>SUBCELLULAR LOCATION</scope>
</reference>
<reference key="5">
    <citation type="journal article" date="2014" name="Glia">
        <title>Arylsulfatase B modulates neurite outgrowth via astrocyte chondroitin-4-sulfate: dysregulation by ethanol.</title>
        <authorList>
            <person name="Zhang X."/>
            <person name="Bhattacharyya S."/>
            <person name="Kusumo H."/>
            <person name="Goodlett C.R."/>
            <person name="Tobacman J.K."/>
            <person name="Guizzetti M."/>
        </authorList>
    </citation>
    <scope>FUNCTION</scope>
    <scope>ACTIVITY REGULATION</scope>
</reference>
<dbReference type="EC" id="3.1.6.12"/>
<dbReference type="EMBL" id="AABR03012149">
    <property type="status" value="NOT_ANNOTATED_CDS"/>
    <property type="molecule type" value="Genomic_DNA"/>
</dbReference>
<dbReference type="EMBL" id="AABR03015281">
    <property type="status" value="NOT_ANNOTATED_CDS"/>
    <property type="molecule type" value="Genomic_DNA"/>
</dbReference>
<dbReference type="EMBL" id="AABR03016930">
    <property type="status" value="NOT_ANNOTATED_CDS"/>
    <property type="molecule type" value="Genomic_DNA"/>
</dbReference>
<dbReference type="EMBL" id="AABR03021723">
    <property type="status" value="NOT_ANNOTATED_CDS"/>
    <property type="molecule type" value="Genomic_DNA"/>
</dbReference>
<dbReference type="EMBL" id="D49434">
    <property type="protein sequence ID" value="BAA08412.1"/>
    <property type="molecule type" value="mRNA"/>
</dbReference>
<dbReference type="EMBL" id="BN000736">
    <property type="protein sequence ID" value="CAI84982.1"/>
    <property type="molecule type" value="mRNA"/>
</dbReference>
<dbReference type="PIR" id="I54210">
    <property type="entry name" value="I54210"/>
</dbReference>
<dbReference type="RefSeq" id="NP_254278.1">
    <property type="nucleotide sequence ID" value="NM_033443.1"/>
</dbReference>
<dbReference type="SMR" id="P50430"/>
<dbReference type="BioGRID" id="247268">
    <property type="interactions" value="1"/>
</dbReference>
<dbReference type="FunCoup" id="P50430">
    <property type="interactions" value="156"/>
</dbReference>
<dbReference type="IntAct" id="P50430">
    <property type="interactions" value="1"/>
</dbReference>
<dbReference type="STRING" id="10116.ENSRNOP00000014860"/>
<dbReference type="GlyCosmos" id="P50430">
    <property type="glycosylation" value="6 sites, No reported glycans"/>
</dbReference>
<dbReference type="GlyGen" id="P50430">
    <property type="glycosylation" value="6 sites"/>
</dbReference>
<dbReference type="PhosphoSitePlus" id="P50430"/>
<dbReference type="jPOST" id="P50430"/>
<dbReference type="PaxDb" id="10116-ENSRNOP00000014860"/>
<dbReference type="Ensembl" id="ENSRNOT00000014860.7">
    <property type="protein sequence ID" value="ENSRNOP00000014860.5"/>
    <property type="gene ID" value="ENSRNOG00000011150.7"/>
</dbReference>
<dbReference type="GeneID" id="25227"/>
<dbReference type="KEGG" id="rno:25227"/>
<dbReference type="UCSC" id="RGD:2158">
    <property type="organism name" value="rat"/>
</dbReference>
<dbReference type="AGR" id="RGD:2158"/>
<dbReference type="CTD" id="411"/>
<dbReference type="RGD" id="2158">
    <property type="gene designation" value="Arsb"/>
</dbReference>
<dbReference type="eggNOG" id="KOG3867">
    <property type="taxonomic scope" value="Eukaryota"/>
</dbReference>
<dbReference type="GeneTree" id="ENSGT00940000158270"/>
<dbReference type="HOGENOM" id="CLU_006332_10_1_1"/>
<dbReference type="InParanoid" id="P50430"/>
<dbReference type="OMA" id="HEHCVFI"/>
<dbReference type="OrthoDB" id="103349at2759"/>
<dbReference type="PhylomeDB" id="P50430"/>
<dbReference type="TreeFam" id="TF314186"/>
<dbReference type="BRENDA" id="3.1.6.12">
    <property type="organism ID" value="5301"/>
</dbReference>
<dbReference type="BRENDA" id="3.1.6.4">
    <property type="organism ID" value="5301"/>
</dbReference>
<dbReference type="Reactome" id="R-RNO-1663150">
    <property type="pathway name" value="The activation of arylsulfatases"/>
</dbReference>
<dbReference type="Reactome" id="R-RNO-2024101">
    <property type="pathway name" value="CS/DS degradation"/>
</dbReference>
<dbReference type="Reactome" id="R-RNO-6798695">
    <property type="pathway name" value="Neutrophil degranulation"/>
</dbReference>
<dbReference type="Reactome" id="R-RNO-9840310">
    <property type="pathway name" value="Glycosphingolipid catabolism"/>
</dbReference>
<dbReference type="PRO" id="PR:P50430"/>
<dbReference type="Proteomes" id="UP000002494">
    <property type="component" value="Chromosome 2"/>
</dbReference>
<dbReference type="Bgee" id="ENSRNOG00000011150">
    <property type="expression patterns" value="Expressed in frontal cortex and 19 other cell types or tissues"/>
</dbReference>
<dbReference type="ExpressionAtlas" id="P50430">
    <property type="expression patterns" value="baseline and differential"/>
</dbReference>
<dbReference type="GO" id="GO:0009986">
    <property type="term" value="C:cell surface"/>
    <property type="evidence" value="ECO:0000314"/>
    <property type="project" value="UniProtKB"/>
</dbReference>
<dbReference type="GO" id="GO:0005764">
    <property type="term" value="C:lysosome"/>
    <property type="evidence" value="ECO:0000266"/>
    <property type="project" value="RGD"/>
</dbReference>
<dbReference type="GO" id="GO:0004065">
    <property type="term" value="F:arylsulfatase activity"/>
    <property type="evidence" value="ECO:0000266"/>
    <property type="project" value="RGD"/>
</dbReference>
<dbReference type="GO" id="GO:0046872">
    <property type="term" value="F:metal ion binding"/>
    <property type="evidence" value="ECO:0007669"/>
    <property type="project" value="UniProtKB-KW"/>
</dbReference>
<dbReference type="GO" id="GO:0003943">
    <property type="term" value="F:N-acetylgalactosamine-4-sulfatase activity"/>
    <property type="evidence" value="ECO:0000250"/>
    <property type="project" value="UniProtKB"/>
</dbReference>
<dbReference type="GO" id="GO:0043890">
    <property type="term" value="F:N-acetylgalactosamine-6-sulfatase activity"/>
    <property type="evidence" value="ECO:0000266"/>
    <property type="project" value="RGD"/>
</dbReference>
<dbReference type="GO" id="GO:0008484">
    <property type="term" value="F:sulfuric ester hydrolase activity"/>
    <property type="evidence" value="ECO:0000314"/>
    <property type="project" value="RGD"/>
</dbReference>
<dbReference type="GO" id="GO:0097065">
    <property type="term" value="P:anterior head development"/>
    <property type="evidence" value="ECO:0000266"/>
    <property type="project" value="RGD"/>
</dbReference>
<dbReference type="GO" id="GO:0006914">
    <property type="term" value="P:autophagy"/>
    <property type="evidence" value="ECO:0000314"/>
    <property type="project" value="RGD"/>
</dbReference>
<dbReference type="GO" id="GO:0061580">
    <property type="term" value="P:colon epithelial cell migration"/>
    <property type="evidence" value="ECO:0000250"/>
    <property type="project" value="UniProtKB"/>
</dbReference>
<dbReference type="GO" id="GO:0030209">
    <property type="term" value="P:dermatan sulfate proteoglycan catabolic process"/>
    <property type="evidence" value="ECO:0000266"/>
    <property type="project" value="RGD"/>
</dbReference>
<dbReference type="GO" id="GO:0010976">
    <property type="term" value="P:positive regulation of neuron projection development"/>
    <property type="evidence" value="ECO:0000315"/>
    <property type="project" value="UniProtKB"/>
</dbReference>
<dbReference type="GO" id="GO:0010632">
    <property type="term" value="P:regulation of epithelial cell migration"/>
    <property type="evidence" value="ECO:0000250"/>
    <property type="project" value="UniProtKB"/>
</dbReference>
<dbReference type="GO" id="GO:0043627">
    <property type="term" value="P:response to estrogen"/>
    <property type="evidence" value="ECO:0000314"/>
    <property type="project" value="RGD"/>
</dbReference>
<dbReference type="GO" id="GO:0051597">
    <property type="term" value="P:response to methylmercury"/>
    <property type="evidence" value="ECO:0000314"/>
    <property type="project" value="RGD"/>
</dbReference>
<dbReference type="GO" id="GO:0007584">
    <property type="term" value="P:response to nutrient"/>
    <property type="evidence" value="ECO:0000314"/>
    <property type="project" value="RGD"/>
</dbReference>
<dbReference type="GO" id="GO:0009268">
    <property type="term" value="P:response to pH"/>
    <property type="evidence" value="ECO:0000314"/>
    <property type="project" value="RGD"/>
</dbReference>
<dbReference type="CDD" id="cd16029">
    <property type="entry name" value="4-S"/>
    <property type="match status" value="1"/>
</dbReference>
<dbReference type="FunFam" id="3.30.1120.10:FF:000002">
    <property type="entry name" value="Arylsulfatase family member J"/>
    <property type="match status" value="1"/>
</dbReference>
<dbReference type="FunFam" id="3.40.720.10:FF:000007">
    <property type="entry name" value="Arylsulfatase family, member J"/>
    <property type="match status" value="1"/>
</dbReference>
<dbReference type="Gene3D" id="3.30.1120.10">
    <property type="match status" value="1"/>
</dbReference>
<dbReference type="Gene3D" id="3.40.720.10">
    <property type="entry name" value="Alkaline Phosphatase, subunit A"/>
    <property type="match status" value="1"/>
</dbReference>
<dbReference type="InterPro" id="IPR017850">
    <property type="entry name" value="Alkaline_phosphatase_core_sf"/>
</dbReference>
<dbReference type="InterPro" id="IPR047115">
    <property type="entry name" value="ARSB"/>
</dbReference>
<dbReference type="InterPro" id="IPR024607">
    <property type="entry name" value="Sulfatase_CS"/>
</dbReference>
<dbReference type="InterPro" id="IPR000917">
    <property type="entry name" value="Sulfatase_N"/>
</dbReference>
<dbReference type="PANTHER" id="PTHR10342">
    <property type="entry name" value="ARYLSULFATASE"/>
    <property type="match status" value="1"/>
</dbReference>
<dbReference type="PANTHER" id="PTHR10342:SF274">
    <property type="entry name" value="ARYLSULFATASE B"/>
    <property type="match status" value="1"/>
</dbReference>
<dbReference type="Pfam" id="PF00884">
    <property type="entry name" value="Sulfatase"/>
    <property type="match status" value="1"/>
</dbReference>
<dbReference type="SUPFAM" id="SSF53649">
    <property type="entry name" value="Alkaline phosphatase-like"/>
    <property type="match status" value="1"/>
</dbReference>
<dbReference type="PROSITE" id="PS00523">
    <property type="entry name" value="SULFATASE_1"/>
    <property type="match status" value="1"/>
</dbReference>
<dbReference type="PROSITE" id="PS00149">
    <property type="entry name" value="SULFATASE_2"/>
    <property type="match status" value="1"/>
</dbReference>
<name>ARSB_RAT</name>
<organism>
    <name type="scientific">Rattus norvegicus</name>
    <name type="common">Rat</name>
    <dbReference type="NCBI Taxonomy" id="10116"/>
    <lineage>
        <taxon>Eukaryota</taxon>
        <taxon>Metazoa</taxon>
        <taxon>Chordata</taxon>
        <taxon>Craniata</taxon>
        <taxon>Vertebrata</taxon>
        <taxon>Euteleostomi</taxon>
        <taxon>Mammalia</taxon>
        <taxon>Eutheria</taxon>
        <taxon>Euarchontoglires</taxon>
        <taxon>Glires</taxon>
        <taxon>Rodentia</taxon>
        <taxon>Myomorpha</taxon>
        <taxon>Muroidea</taxon>
        <taxon>Muridae</taxon>
        <taxon>Murinae</taxon>
        <taxon>Rattus</taxon>
    </lineage>
</organism>
<accession>P50430</accession>
<accession>Q32KK1</accession>
<evidence type="ECO:0000250" key="1"/>
<evidence type="ECO:0000250" key="2">
    <source>
        <dbReference type="UniProtKB" id="P15289"/>
    </source>
</evidence>
<evidence type="ECO:0000250" key="3">
    <source>
        <dbReference type="UniProtKB" id="P15848"/>
    </source>
</evidence>
<evidence type="ECO:0000255" key="4"/>
<evidence type="ECO:0000269" key="5">
    <source>
    </source>
</evidence>
<evidence type="ECO:0000269" key="6">
    <source>
    </source>
</evidence>
<evidence type="ECO:0000269" key="7">
    <source>
    </source>
</evidence>
<evidence type="ECO:0000305" key="8"/>
<protein>
    <recommendedName>
        <fullName>Arylsulfatase B</fullName>
        <shortName>ASB</shortName>
        <ecNumber>3.1.6.12</ecNumber>
    </recommendedName>
    <alternativeName>
        <fullName>N-acetylgalactosamine-4-sulfatase</fullName>
        <shortName>G4S</shortName>
    </alternativeName>
</protein>
<sequence length="528" mass="58959">MGELSGCTGGSRAGGPGPRLPLLLLLLLWPARASDAAPPPHVVFVLADDLGWNDLGFHGSVIRTPHLDALAAGGVVLDNYYVQPLCTPSRSQLLTGRYQIHMGLQHYLIMTCQPNCVPLDEKLLPQLLKDAGYATHMVGKWHLGMYRKECLPTRRGFDTYFGYLLGSEDYYTHEACAPIECLNGTRCALDLRDGEEPAKEYTDIYSTNIFTKRATTLIANHPPEKPLFLYLAFQSVHDPLQVPEEYMEPYDFIQDKHRRIYAGMVSLLDEAVGNVTKALKSRGLWNNTVLIFSTDNGGQTRSGGNNWPLRGRKGTLWEGGIRGAGFVASPLLKQKGVKSRELMHITDWLPTLVNLAGGSTHGTKPLDGFDVWETISEGSPSPRVELLLNIDPDFFDGLPCPGKNTTPEKNDSFPLEHSAFNTSIHAGIRYKNWKLLTGYPGCGYWFPPPSQSNISEVPSVDSPTKTLWLFDINRDPEERHDVSREHPHIVQNLLSRLQYYHEHSVPSYFPPLDPRCDPKGTGVWSPWM</sequence>
<keyword id="KW-0106">Calcium</keyword>
<keyword id="KW-1015">Disulfide bond</keyword>
<keyword id="KW-0325">Glycoprotein</keyword>
<keyword id="KW-0378">Hydrolase</keyword>
<keyword id="KW-0458">Lysosome</keyword>
<keyword id="KW-0479">Metal-binding</keyword>
<keyword id="KW-0510">Mucopolysaccharidosis</keyword>
<keyword id="KW-1185">Reference proteome</keyword>